<name>BETA_ECOLI</name>
<organism>
    <name type="scientific">Escherichia coli (strain K12)</name>
    <dbReference type="NCBI Taxonomy" id="83333"/>
    <lineage>
        <taxon>Bacteria</taxon>
        <taxon>Pseudomonadati</taxon>
        <taxon>Pseudomonadota</taxon>
        <taxon>Gammaproteobacteria</taxon>
        <taxon>Enterobacterales</taxon>
        <taxon>Enterobacteriaceae</taxon>
        <taxon>Escherichia</taxon>
    </lineage>
</organism>
<protein>
    <recommendedName>
        <fullName evidence="1">Oxygen-dependent choline dehydrogenase</fullName>
        <shortName evidence="1">CDH</shortName>
        <shortName evidence="1">CHD</shortName>
        <ecNumber evidence="1">1.1.99.1</ecNumber>
    </recommendedName>
    <alternativeName>
        <fullName evidence="1">Betaine aldehyde dehydrogenase</fullName>
        <shortName evidence="1">BADH</shortName>
        <ecNumber evidence="1">1.2.1.8</ecNumber>
    </alternativeName>
</protein>
<feature type="chain" id="PRO_0000205586" description="Oxygen-dependent choline dehydrogenase">
    <location>
        <begin position="1"/>
        <end position="556"/>
    </location>
</feature>
<feature type="active site" description="Proton acceptor" evidence="1">
    <location>
        <position position="473"/>
    </location>
</feature>
<feature type="binding site" evidence="1">
    <location>
        <begin position="4"/>
        <end position="33"/>
    </location>
    <ligand>
        <name>FAD</name>
        <dbReference type="ChEBI" id="CHEBI:57692"/>
    </ligand>
</feature>
<evidence type="ECO:0000255" key="1">
    <source>
        <dbReference type="HAMAP-Rule" id="MF_00750"/>
    </source>
</evidence>
<evidence type="ECO:0000269" key="2">
    <source>
    </source>
</evidence>
<evidence type="ECO:0000269" key="3">
    <source>
    </source>
</evidence>
<evidence type="ECO:0000269" key="4">
    <source>
    </source>
</evidence>
<evidence type="ECO:0000305" key="5"/>
<reference key="1">
    <citation type="journal article" date="1991" name="Mol. Microbiol.">
        <title>DNA sequence and analysis of the bet genes encoding the osmoregulatory choline-glycine betaine pathway of Escherichia coli.</title>
        <authorList>
            <person name="Lamark T."/>
            <person name="Kaasen E."/>
            <person name="Eshoo M.W."/>
            <person name="Falkenberg P."/>
            <person name="McDougall J."/>
            <person name="Strom A.R."/>
        </authorList>
    </citation>
    <scope>NUCLEOTIDE SEQUENCE [GENOMIC DNA]</scope>
    <source>
        <strain>K12</strain>
    </source>
</reference>
<reference key="2">
    <citation type="journal article" date="1991" name="Gene">
        <title>Characterization of an Escherichia coli gene encoding betaine aldehyde dehydrogenase (BADH): structural similarity to mammalian ALDHs and a plant BADH.</title>
        <authorList>
            <person name="Boyd L.A."/>
            <person name="Adam L."/>
            <person name="Pelcher L.E."/>
            <person name="McHughen A."/>
            <person name="Hirji R."/>
            <person name="Selvaraj G."/>
        </authorList>
    </citation>
    <scope>NUCLEOTIDE SEQUENCE [GENOMIC DNA]</scope>
</reference>
<reference key="3">
    <citation type="submission" date="1997-01" db="EMBL/GenBank/DDBJ databases">
        <title>Sequence of minutes 4-25 of Escherichia coli.</title>
        <authorList>
            <person name="Chung E."/>
            <person name="Allen E."/>
            <person name="Araujo R."/>
            <person name="Aparicio A.M."/>
            <person name="Davis K."/>
            <person name="Duncan M."/>
            <person name="Federspiel N."/>
            <person name="Hyman R."/>
            <person name="Kalman S."/>
            <person name="Komp C."/>
            <person name="Kurdi O."/>
            <person name="Lew H."/>
            <person name="Lin D."/>
            <person name="Namath A."/>
            <person name="Oefner P."/>
            <person name="Roberts D."/>
            <person name="Schramm S."/>
            <person name="Davis R.W."/>
        </authorList>
    </citation>
    <scope>NUCLEOTIDE SEQUENCE [LARGE SCALE GENOMIC DNA]</scope>
    <source>
        <strain>K12 / MG1655 / ATCC 47076</strain>
    </source>
</reference>
<reference key="4">
    <citation type="journal article" date="1997" name="Science">
        <title>The complete genome sequence of Escherichia coli K-12.</title>
        <authorList>
            <person name="Blattner F.R."/>
            <person name="Plunkett G. III"/>
            <person name="Bloch C.A."/>
            <person name="Perna N.T."/>
            <person name="Burland V."/>
            <person name="Riley M."/>
            <person name="Collado-Vides J."/>
            <person name="Glasner J.D."/>
            <person name="Rode C.K."/>
            <person name="Mayhew G.F."/>
            <person name="Gregor J."/>
            <person name="Davis N.W."/>
            <person name="Kirkpatrick H.A."/>
            <person name="Goeden M.A."/>
            <person name="Rose D.J."/>
            <person name="Mau B."/>
            <person name="Shao Y."/>
        </authorList>
    </citation>
    <scope>NUCLEOTIDE SEQUENCE [LARGE SCALE GENOMIC DNA]</scope>
    <source>
        <strain>K12 / MG1655 / ATCC 47076</strain>
    </source>
</reference>
<reference key="5">
    <citation type="journal article" date="2006" name="Mol. Syst. Biol.">
        <title>Highly accurate genome sequences of Escherichia coli K-12 strains MG1655 and W3110.</title>
        <authorList>
            <person name="Hayashi K."/>
            <person name="Morooka N."/>
            <person name="Yamamoto Y."/>
            <person name="Fujita K."/>
            <person name="Isono K."/>
            <person name="Choi S."/>
            <person name="Ohtsubo E."/>
            <person name="Baba T."/>
            <person name="Wanner B.L."/>
            <person name="Mori H."/>
            <person name="Horiuchi T."/>
        </authorList>
    </citation>
    <scope>NUCLEOTIDE SEQUENCE [LARGE SCALE GENOMIC DNA]</scope>
    <source>
        <strain>K12 / W3110 / ATCC 27325 / DSM 5911</strain>
    </source>
</reference>
<reference key="6">
    <citation type="journal article" date="1986" name="J. Bacteriol.">
        <title>Choline-glycine betaine pathway confers a high level of osmotic tolerance in Escherichia coli.</title>
        <authorList>
            <person name="Landfald B."/>
            <person name="Strom A.R."/>
        </authorList>
    </citation>
    <scope>FUNCTION</scope>
    <scope>CATALYTIC ACTIVITY</scope>
    <scope>BIOPHYSICOCHEMICAL PROPERTIES</scope>
    <scope>INDUCTION</scope>
    <scope>ACTIVITY REGULATION</scope>
    <scope>SUBCELLULAR LOCATION</scope>
</reference>
<reference key="7">
    <citation type="journal article" date="1986" name="J. Bacteriol.">
        <title>Selection, mapping, and characterization of osmoregulatory mutants of Escherichia coli blocked in the choline-glycine betaine pathway.</title>
        <authorList>
            <person name="Styrvold O.B."/>
            <person name="Falkenberg P."/>
            <person name="Landfald B."/>
            <person name="Eshoo M.W."/>
            <person name="Bjornsen T."/>
            <person name="Strom A.R."/>
        </authorList>
    </citation>
    <scope>FUNCTION</scope>
    <scope>DISRUPTION PHENOTYPE</scope>
    <scope>NOMENCLATURE</scope>
</reference>
<reference key="8">
    <citation type="journal article" date="1996" name="J. Bacteriol.">
        <title>The complex bet promoters of Escherichia coli: regulation by oxygen (ArcA), choline (BetI), and osmotic stress.</title>
        <authorList>
            <person name="Lamark T."/>
            <person name="Rokenes T.P."/>
            <person name="McDougall J."/>
            <person name="Strom A.R."/>
        </authorList>
    </citation>
    <scope>INDUCTION</scope>
</reference>
<gene>
    <name evidence="1" type="primary">betA</name>
    <name type="ordered locus">b0311</name>
    <name type="ordered locus">JW0303</name>
</gene>
<comment type="function">
    <text evidence="1 2 3">Involved in the biosynthesis of the osmoprotectant glycine betaine. Catalyzes the oxidation of choline to betaine aldehyde and betaine aldehyde to glycine betaine at the same rate.</text>
</comment>
<comment type="catalytic activity">
    <reaction evidence="1 2">
        <text>choline + A = betaine aldehyde + AH2</text>
        <dbReference type="Rhea" id="RHEA:17433"/>
        <dbReference type="ChEBI" id="CHEBI:13193"/>
        <dbReference type="ChEBI" id="CHEBI:15354"/>
        <dbReference type="ChEBI" id="CHEBI:15710"/>
        <dbReference type="ChEBI" id="CHEBI:17499"/>
        <dbReference type="EC" id="1.1.99.1"/>
    </reaction>
</comment>
<comment type="catalytic activity">
    <reaction evidence="1 2">
        <text>betaine aldehyde + NAD(+) + H2O = glycine betaine + NADH + 2 H(+)</text>
        <dbReference type="Rhea" id="RHEA:15305"/>
        <dbReference type="ChEBI" id="CHEBI:15377"/>
        <dbReference type="ChEBI" id="CHEBI:15378"/>
        <dbReference type="ChEBI" id="CHEBI:15710"/>
        <dbReference type="ChEBI" id="CHEBI:17750"/>
        <dbReference type="ChEBI" id="CHEBI:57540"/>
        <dbReference type="ChEBI" id="CHEBI:57945"/>
        <dbReference type="EC" id="1.2.1.8"/>
    </reaction>
</comment>
<comment type="cofactor">
    <cofactor evidence="1">
        <name>FAD</name>
        <dbReference type="ChEBI" id="CHEBI:57692"/>
    </cofactor>
</comment>
<comment type="activity regulation">
    <text evidence="2">Activated by high osmotic strength.</text>
</comment>
<comment type="biophysicochemical properties">
    <kinetics>
        <KM evidence="2">0.06 mM for NAD (at pH 7.5 and 37 degrees Celsius)</KM>
        <KM evidence="2">0.13 mM for glycine betaine aldehyde (at pH 7.5 and 37 degrees Celsius)</KM>
        <KM evidence="2">0.5 mM for NADP (at pH 7.5 and 37 degrees Celsius)</KM>
        <KM evidence="2">1.5 mM for choline (at pH 7.5 and 37 degrees Celsius)</KM>
        <KM evidence="2">1.6 mM for glycine betaine aldehyde (at pH 7.5 and 37 degrees Celsius)</KM>
    </kinetics>
    <phDependence>
        <text evidence="2">Optimum pH is 7.5 for choline dehydrogenase and is between 7.5 and 9.5 for glycine betaine-aldehyde dehydrogenase.</text>
    </phDependence>
</comment>
<comment type="pathway">
    <text evidence="1">Amine and polyamine biosynthesis; betaine biosynthesis via choline pathway; betaine aldehyde from choline (cytochrome c reductase route): step 1/1.</text>
</comment>
<comment type="subcellular location">
    <subcellularLocation>
        <location evidence="2">Cell membrane</location>
        <topology evidence="2">Peripheral membrane protein</topology>
    </subcellularLocation>
</comment>
<comment type="induction">
    <text evidence="2 4">By osmotic stress. Choline is required for full expression. Oxygen and choline exert their control via the transacting DNA-binding proteins ArcA and BetI, respectively.</text>
</comment>
<comment type="disruption phenotype">
    <text evidence="3">Cells lacking this gene do not grow at high osmotic strength in the presence of choline, but are able to grow when the medium is supplemented with glycine betaine.</text>
</comment>
<comment type="similarity">
    <text evidence="1">Belongs to the GMC oxidoreductase family.</text>
</comment>
<comment type="sequence caution" evidence="5">
    <conflict type="erroneous initiation">
        <sequence resource="EMBL-CDS" id="AAB18037"/>
    </conflict>
    <text>Truncated N-terminus.</text>
</comment>
<proteinExistence type="evidence at protein level"/>
<accession>P17444</accession>
<accession>P77861</accession>
<accession>Q2MCB2</accession>
<dbReference type="EC" id="1.1.99.1" evidence="1"/>
<dbReference type="EC" id="1.2.1.8" evidence="1"/>
<dbReference type="EMBL" id="X52905">
    <property type="protein sequence ID" value="CAA37093.1"/>
    <property type="molecule type" value="Genomic_DNA"/>
</dbReference>
<dbReference type="EMBL" id="M77738">
    <property type="protein sequence ID" value="AAA23504.1"/>
    <property type="molecule type" value="Genomic_DNA"/>
</dbReference>
<dbReference type="EMBL" id="U73857">
    <property type="protein sequence ID" value="AAB18037.1"/>
    <property type="status" value="ALT_INIT"/>
    <property type="molecule type" value="Genomic_DNA"/>
</dbReference>
<dbReference type="EMBL" id="U00096">
    <property type="protein sequence ID" value="AAC73414.1"/>
    <property type="molecule type" value="Genomic_DNA"/>
</dbReference>
<dbReference type="EMBL" id="AP009048">
    <property type="protein sequence ID" value="BAE76094.1"/>
    <property type="molecule type" value="Genomic_DNA"/>
</dbReference>
<dbReference type="PIR" id="S15182">
    <property type="entry name" value="S10901"/>
</dbReference>
<dbReference type="RefSeq" id="NP_414845.1">
    <property type="nucleotide sequence ID" value="NC_000913.3"/>
</dbReference>
<dbReference type="RefSeq" id="WP_001159094.1">
    <property type="nucleotide sequence ID" value="NZ_STEB01000020.1"/>
</dbReference>
<dbReference type="SMR" id="P17444"/>
<dbReference type="BioGRID" id="4262800">
    <property type="interactions" value="14"/>
</dbReference>
<dbReference type="BioGRID" id="850086">
    <property type="interactions" value="1"/>
</dbReference>
<dbReference type="FunCoup" id="P17444">
    <property type="interactions" value="365"/>
</dbReference>
<dbReference type="IntAct" id="P17444">
    <property type="interactions" value="8"/>
</dbReference>
<dbReference type="STRING" id="511145.b0311"/>
<dbReference type="PaxDb" id="511145-b0311"/>
<dbReference type="EnsemblBacteria" id="AAC73414">
    <property type="protein sequence ID" value="AAC73414"/>
    <property type="gene ID" value="b0311"/>
</dbReference>
<dbReference type="GeneID" id="945716"/>
<dbReference type="KEGG" id="ecj:JW0303"/>
<dbReference type="KEGG" id="eco:b0311"/>
<dbReference type="KEGG" id="ecoc:C3026_01520"/>
<dbReference type="KEGG" id="ecoc:C3026_24695"/>
<dbReference type="PATRIC" id="fig|1411691.4.peg.1966"/>
<dbReference type="EchoBASE" id="EB0107"/>
<dbReference type="eggNOG" id="COG2303">
    <property type="taxonomic scope" value="Bacteria"/>
</dbReference>
<dbReference type="HOGENOM" id="CLU_002865_7_1_6"/>
<dbReference type="InParanoid" id="P17444"/>
<dbReference type="OMA" id="NHFESCA"/>
<dbReference type="OrthoDB" id="9785276at2"/>
<dbReference type="PhylomeDB" id="P17444"/>
<dbReference type="BioCyc" id="EcoCyc:CHD-MONOMER"/>
<dbReference type="BioCyc" id="MetaCyc:CHD-MONOMER"/>
<dbReference type="UniPathway" id="UPA00529">
    <property type="reaction ID" value="UER00385"/>
</dbReference>
<dbReference type="PRO" id="PR:P17444"/>
<dbReference type="Proteomes" id="UP000000625">
    <property type="component" value="Chromosome"/>
</dbReference>
<dbReference type="GO" id="GO:0016020">
    <property type="term" value="C:membrane"/>
    <property type="evidence" value="ECO:0000314"/>
    <property type="project" value="EcoCyc"/>
</dbReference>
<dbReference type="GO" id="GO:0005886">
    <property type="term" value="C:plasma membrane"/>
    <property type="evidence" value="ECO:0007669"/>
    <property type="project" value="UniProtKB-SubCell"/>
</dbReference>
<dbReference type="GO" id="GO:0008802">
    <property type="term" value="F:betaine-aldehyde dehydrogenase (NAD+) activity"/>
    <property type="evidence" value="ECO:0007669"/>
    <property type="project" value="UniProtKB-EC"/>
</dbReference>
<dbReference type="GO" id="GO:0008812">
    <property type="term" value="F:choline dehydrogenase activity"/>
    <property type="evidence" value="ECO:0000314"/>
    <property type="project" value="EcoCyc"/>
</dbReference>
<dbReference type="GO" id="GO:0050660">
    <property type="term" value="F:flavin adenine dinucleotide binding"/>
    <property type="evidence" value="ECO:0007669"/>
    <property type="project" value="InterPro"/>
</dbReference>
<dbReference type="GO" id="GO:0019285">
    <property type="term" value="P:glycine betaine biosynthetic process from choline"/>
    <property type="evidence" value="ECO:0000315"/>
    <property type="project" value="EcoCyc"/>
</dbReference>
<dbReference type="GO" id="GO:0006970">
    <property type="term" value="P:response to osmotic stress"/>
    <property type="evidence" value="ECO:0000315"/>
    <property type="project" value="EcoCyc"/>
</dbReference>
<dbReference type="Gene3D" id="3.50.50.60">
    <property type="entry name" value="FAD/NAD(P)-binding domain"/>
    <property type="match status" value="1"/>
</dbReference>
<dbReference type="Gene3D" id="3.30.560.10">
    <property type="entry name" value="Glucose Oxidase, domain 3"/>
    <property type="match status" value="1"/>
</dbReference>
<dbReference type="HAMAP" id="MF_00750">
    <property type="entry name" value="Choline_dehydrogen"/>
    <property type="match status" value="1"/>
</dbReference>
<dbReference type="InterPro" id="IPR011533">
    <property type="entry name" value="BetA"/>
</dbReference>
<dbReference type="InterPro" id="IPR036188">
    <property type="entry name" value="FAD/NAD-bd_sf"/>
</dbReference>
<dbReference type="InterPro" id="IPR012132">
    <property type="entry name" value="GMC_OxRdtase"/>
</dbReference>
<dbReference type="InterPro" id="IPR000172">
    <property type="entry name" value="GMC_OxRdtase_N"/>
</dbReference>
<dbReference type="InterPro" id="IPR007867">
    <property type="entry name" value="GMC_OxRtase_C"/>
</dbReference>
<dbReference type="NCBIfam" id="TIGR01810">
    <property type="entry name" value="betA"/>
    <property type="match status" value="1"/>
</dbReference>
<dbReference type="NCBIfam" id="NF002550">
    <property type="entry name" value="PRK02106.1"/>
    <property type="match status" value="1"/>
</dbReference>
<dbReference type="PANTHER" id="PTHR11552:SF147">
    <property type="entry name" value="CHOLINE DEHYDROGENASE, MITOCHONDRIAL"/>
    <property type="match status" value="1"/>
</dbReference>
<dbReference type="PANTHER" id="PTHR11552">
    <property type="entry name" value="GLUCOSE-METHANOL-CHOLINE GMC OXIDOREDUCTASE"/>
    <property type="match status" value="1"/>
</dbReference>
<dbReference type="Pfam" id="PF05199">
    <property type="entry name" value="GMC_oxred_C"/>
    <property type="match status" value="1"/>
</dbReference>
<dbReference type="Pfam" id="PF00732">
    <property type="entry name" value="GMC_oxred_N"/>
    <property type="match status" value="1"/>
</dbReference>
<dbReference type="PIRSF" id="PIRSF000137">
    <property type="entry name" value="Alcohol_oxidase"/>
    <property type="match status" value="1"/>
</dbReference>
<dbReference type="SUPFAM" id="SSF54373">
    <property type="entry name" value="FAD-linked reductases, C-terminal domain"/>
    <property type="match status" value="1"/>
</dbReference>
<dbReference type="SUPFAM" id="SSF51905">
    <property type="entry name" value="FAD/NAD(P)-binding domain"/>
    <property type="match status" value="1"/>
</dbReference>
<dbReference type="PROSITE" id="PS00623">
    <property type="entry name" value="GMC_OXRED_1"/>
    <property type="match status" value="1"/>
</dbReference>
<dbReference type="PROSITE" id="PS00624">
    <property type="entry name" value="GMC_OXRED_2"/>
    <property type="match status" value="1"/>
</dbReference>
<sequence length="556" mass="61878">MQFDYIIIGAGSAGNVLATRLTEDPNTSVLLLEAGGPDYRFDFRTQMPAALAFPLQGKRYNWAYETEPEPFMNNRRMECGRGKGLGGSSLINGMCYIRGNALDLDNWAQEPGLENWSYLDCLPYYRKAETRDMGENDYHGGDGPVSVTTSKPGVNPLFEAMIEAGVQAGYPRTDDLNGYQQEGFGPMDRTVTPQGRRASTARGYLDQAKSRPNLTIRTHAMTDHIIFDGKRAVGVEWLEGDSTIPTRATANKEVLLCAGAIASPQILQRSGVGNAELLAEFDIPLVHELPGVGENLQDHLEMYLQYECKEPVSLYPALQWWNQPKIGAEWLFGGTGVGASNHFEAGGFIRSREEFAWPNIQYHFLPVAINYNGSNAVKEHGFQCHVGSMRSPSRGHVRIKSRDPHQHPAILFNYMSHEQDWQEFRDAIRITREIMHQPALDQYRGREISPGVECQTDEQLDEFVRNHAETAFHPCGTCKMGYDEMSVVDGEGRVHGLEGLRVVDASIMPQIITGNLNATTIMIGEKIADMIRGQEALPRSTAGYFVANGMPVRAKK</sequence>
<keyword id="KW-1003">Cell membrane</keyword>
<keyword id="KW-0274">FAD</keyword>
<keyword id="KW-0285">Flavoprotein</keyword>
<keyword id="KW-0472">Membrane</keyword>
<keyword id="KW-0520">NAD</keyword>
<keyword id="KW-0560">Oxidoreductase</keyword>
<keyword id="KW-1185">Reference proteome</keyword>
<keyword id="KW-0346">Stress response</keyword>